<comment type="function">
    <text evidence="1">Required for insertion of 4Fe-4S clusters for at least IspG.</text>
</comment>
<comment type="cofactor">
    <cofactor evidence="1">
        <name>iron-sulfur cluster</name>
        <dbReference type="ChEBI" id="CHEBI:30408"/>
    </cofactor>
    <text evidence="1">Binds 1 iron-sulfur cluster per subunit.</text>
</comment>
<comment type="subunit">
    <text evidence="1">Homodimer.</text>
</comment>
<comment type="similarity">
    <text evidence="1">Belongs to the HesB/IscA family.</text>
</comment>
<name>ERPA_HAEIE</name>
<reference key="1">
    <citation type="journal article" date="2007" name="Genome Biol.">
        <title>Characterization and modeling of the Haemophilus influenzae core and supragenomes based on the complete genomic sequences of Rd and 12 clinical nontypeable strains.</title>
        <authorList>
            <person name="Hogg J.S."/>
            <person name="Hu F.Z."/>
            <person name="Janto B."/>
            <person name="Boissy R."/>
            <person name="Hayes J."/>
            <person name="Keefe R."/>
            <person name="Post J.C."/>
            <person name="Ehrlich G.D."/>
        </authorList>
    </citation>
    <scope>NUCLEOTIDE SEQUENCE [LARGE SCALE GENOMIC DNA]</scope>
    <source>
        <strain>PittEE</strain>
    </source>
</reference>
<feature type="chain" id="PRO_0000311489" description="Iron-sulfur cluster insertion protein ErpA">
    <location>
        <begin position="1"/>
        <end position="114"/>
    </location>
</feature>
<feature type="binding site" evidence="1">
    <location>
        <position position="42"/>
    </location>
    <ligand>
        <name>iron-sulfur cluster</name>
        <dbReference type="ChEBI" id="CHEBI:30408"/>
    </ligand>
</feature>
<feature type="binding site" evidence="1">
    <location>
        <position position="106"/>
    </location>
    <ligand>
        <name>iron-sulfur cluster</name>
        <dbReference type="ChEBI" id="CHEBI:30408"/>
    </ligand>
</feature>
<feature type="binding site" evidence="1">
    <location>
        <position position="108"/>
    </location>
    <ligand>
        <name>iron-sulfur cluster</name>
        <dbReference type="ChEBI" id="CHEBI:30408"/>
    </ligand>
</feature>
<gene>
    <name evidence="1" type="primary">erpA</name>
    <name type="ordered locus">CGSHiEE_03435</name>
</gene>
<protein>
    <recommendedName>
        <fullName evidence="1">Iron-sulfur cluster insertion protein ErpA</fullName>
    </recommendedName>
</protein>
<sequence>MIDDIAVPLTFTDAAANKVKSLISEEENTDLKLRVYITGGGCSGFQYGFTFDEKVNDGDLTIEKSGVQLVIDPMSLQYLIGGTVDYTEGLEGSRFTVNNPNATSTCGCGSSFSI</sequence>
<accession>A5UBF7</accession>
<evidence type="ECO:0000255" key="1">
    <source>
        <dbReference type="HAMAP-Rule" id="MF_01380"/>
    </source>
</evidence>
<proteinExistence type="inferred from homology"/>
<organism>
    <name type="scientific">Haemophilus influenzae (strain PittEE)</name>
    <dbReference type="NCBI Taxonomy" id="374930"/>
    <lineage>
        <taxon>Bacteria</taxon>
        <taxon>Pseudomonadati</taxon>
        <taxon>Pseudomonadota</taxon>
        <taxon>Gammaproteobacteria</taxon>
        <taxon>Pasteurellales</taxon>
        <taxon>Pasteurellaceae</taxon>
        <taxon>Haemophilus</taxon>
    </lineage>
</organism>
<dbReference type="EMBL" id="CP000671">
    <property type="protein sequence ID" value="ABQ98108.1"/>
    <property type="molecule type" value="Genomic_DNA"/>
</dbReference>
<dbReference type="BMRB" id="A5UBF7"/>
<dbReference type="SMR" id="A5UBF7"/>
<dbReference type="KEGG" id="hip:CGSHiEE_03435"/>
<dbReference type="HOGENOM" id="CLU_069054_5_3_6"/>
<dbReference type="GO" id="GO:0005829">
    <property type="term" value="C:cytosol"/>
    <property type="evidence" value="ECO:0007669"/>
    <property type="project" value="TreeGrafter"/>
</dbReference>
<dbReference type="GO" id="GO:0051537">
    <property type="term" value="F:2 iron, 2 sulfur cluster binding"/>
    <property type="evidence" value="ECO:0007669"/>
    <property type="project" value="UniProtKB-ARBA"/>
</dbReference>
<dbReference type="GO" id="GO:0051539">
    <property type="term" value="F:4 iron, 4 sulfur cluster binding"/>
    <property type="evidence" value="ECO:0007669"/>
    <property type="project" value="TreeGrafter"/>
</dbReference>
<dbReference type="GO" id="GO:0005506">
    <property type="term" value="F:iron ion binding"/>
    <property type="evidence" value="ECO:0007669"/>
    <property type="project" value="UniProtKB-UniRule"/>
</dbReference>
<dbReference type="GO" id="GO:0016226">
    <property type="term" value="P:iron-sulfur cluster assembly"/>
    <property type="evidence" value="ECO:0007669"/>
    <property type="project" value="UniProtKB-UniRule"/>
</dbReference>
<dbReference type="FunFam" id="2.60.300.12:FF:000002">
    <property type="entry name" value="Iron-sulfur cluster insertion protein ErpA"/>
    <property type="match status" value="1"/>
</dbReference>
<dbReference type="Gene3D" id="2.60.300.12">
    <property type="entry name" value="HesB-like domain"/>
    <property type="match status" value="1"/>
</dbReference>
<dbReference type="HAMAP" id="MF_01380">
    <property type="entry name" value="Fe_S_insert_ErpA"/>
    <property type="match status" value="1"/>
</dbReference>
<dbReference type="InterPro" id="IPR000361">
    <property type="entry name" value="FeS_biogenesis"/>
</dbReference>
<dbReference type="InterPro" id="IPR016092">
    <property type="entry name" value="FeS_cluster_insertion"/>
</dbReference>
<dbReference type="InterPro" id="IPR017870">
    <property type="entry name" value="FeS_cluster_insertion_CS"/>
</dbReference>
<dbReference type="InterPro" id="IPR023063">
    <property type="entry name" value="FeS_cluster_insertion_RrpA"/>
</dbReference>
<dbReference type="InterPro" id="IPR035903">
    <property type="entry name" value="HesB-like_dom_sf"/>
</dbReference>
<dbReference type="NCBIfam" id="TIGR00049">
    <property type="entry name" value="iron-sulfur cluster assembly accessory protein"/>
    <property type="match status" value="1"/>
</dbReference>
<dbReference type="NCBIfam" id="NF010147">
    <property type="entry name" value="PRK13623.1"/>
    <property type="match status" value="1"/>
</dbReference>
<dbReference type="PANTHER" id="PTHR43011">
    <property type="entry name" value="IRON-SULFUR CLUSTER ASSEMBLY 2 HOMOLOG, MITOCHONDRIAL"/>
    <property type="match status" value="1"/>
</dbReference>
<dbReference type="PANTHER" id="PTHR43011:SF1">
    <property type="entry name" value="IRON-SULFUR CLUSTER ASSEMBLY 2 HOMOLOG, MITOCHONDRIAL"/>
    <property type="match status" value="1"/>
</dbReference>
<dbReference type="Pfam" id="PF01521">
    <property type="entry name" value="Fe-S_biosyn"/>
    <property type="match status" value="1"/>
</dbReference>
<dbReference type="SUPFAM" id="SSF89360">
    <property type="entry name" value="HesB-like domain"/>
    <property type="match status" value="1"/>
</dbReference>
<dbReference type="PROSITE" id="PS01152">
    <property type="entry name" value="HESB"/>
    <property type="match status" value="1"/>
</dbReference>
<keyword id="KW-0408">Iron</keyword>
<keyword id="KW-0411">Iron-sulfur</keyword>
<keyword id="KW-0479">Metal-binding</keyword>